<dbReference type="EMBL" id="AE013598">
    <property type="protein sequence ID" value="AAW75831.1"/>
    <property type="molecule type" value="Genomic_DNA"/>
</dbReference>
<dbReference type="SMR" id="Q5GZP0"/>
<dbReference type="STRING" id="291331.XOO2577"/>
<dbReference type="KEGG" id="xoo:XOO2577"/>
<dbReference type="HOGENOM" id="CLU_045235_1_0_6"/>
<dbReference type="Proteomes" id="UP000006735">
    <property type="component" value="Chromosome"/>
</dbReference>
<dbReference type="GO" id="GO:0009428">
    <property type="term" value="C:bacterial-type flagellum basal body, distal rod, P ring"/>
    <property type="evidence" value="ECO:0007669"/>
    <property type="project" value="InterPro"/>
</dbReference>
<dbReference type="GO" id="GO:0030288">
    <property type="term" value="C:outer membrane-bounded periplasmic space"/>
    <property type="evidence" value="ECO:0007669"/>
    <property type="project" value="InterPro"/>
</dbReference>
<dbReference type="GO" id="GO:0005198">
    <property type="term" value="F:structural molecule activity"/>
    <property type="evidence" value="ECO:0007669"/>
    <property type="project" value="InterPro"/>
</dbReference>
<dbReference type="GO" id="GO:0071973">
    <property type="term" value="P:bacterial-type flagellum-dependent cell motility"/>
    <property type="evidence" value="ECO:0007669"/>
    <property type="project" value="InterPro"/>
</dbReference>
<dbReference type="HAMAP" id="MF_00416">
    <property type="entry name" value="FlgI"/>
    <property type="match status" value="1"/>
</dbReference>
<dbReference type="InterPro" id="IPR001782">
    <property type="entry name" value="Flag_FlgI"/>
</dbReference>
<dbReference type="NCBIfam" id="NF003676">
    <property type="entry name" value="PRK05303.1"/>
    <property type="match status" value="1"/>
</dbReference>
<dbReference type="PANTHER" id="PTHR30381">
    <property type="entry name" value="FLAGELLAR P-RING PERIPLASMIC PROTEIN FLGI"/>
    <property type="match status" value="1"/>
</dbReference>
<dbReference type="PANTHER" id="PTHR30381:SF0">
    <property type="entry name" value="FLAGELLAR P-RING PROTEIN"/>
    <property type="match status" value="1"/>
</dbReference>
<dbReference type="Pfam" id="PF02119">
    <property type="entry name" value="FlgI"/>
    <property type="match status" value="1"/>
</dbReference>
<dbReference type="PRINTS" id="PR01010">
    <property type="entry name" value="FLGPRINGFLGI"/>
</dbReference>
<feature type="signal peptide" evidence="1">
    <location>
        <begin position="1"/>
        <end position="26"/>
    </location>
</feature>
<feature type="chain" id="PRO_0000041808" description="Flagellar P-ring protein">
    <location>
        <begin position="27"/>
        <end position="372"/>
    </location>
</feature>
<organism>
    <name type="scientific">Xanthomonas oryzae pv. oryzae (strain KACC10331 / KXO85)</name>
    <dbReference type="NCBI Taxonomy" id="291331"/>
    <lineage>
        <taxon>Bacteria</taxon>
        <taxon>Pseudomonadati</taxon>
        <taxon>Pseudomonadota</taxon>
        <taxon>Gammaproteobacteria</taxon>
        <taxon>Lysobacterales</taxon>
        <taxon>Lysobacteraceae</taxon>
        <taxon>Xanthomonas</taxon>
    </lineage>
</organism>
<comment type="function">
    <text evidence="1">Assembles around the rod to form the L-ring and probably protects the motor/basal body from shearing forces during rotation.</text>
</comment>
<comment type="subunit">
    <text evidence="1">The basal body constitutes a major portion of the flagellar organelle and consists of four rings (L,P,S, and M) mounted on a central rod.</text>
</comment>
<comment type="subcellular location">
    <subcellularLocation>
        <location evidence="1">Periplasm</location>
    </subcellularLocation>
    <subcellularLocation>
        <location evidence="1">Bacterial flagellum basal body</location>
    </subcellularLocation>
</comment>
<comment type="similarity">
    <text evidence="1">Belongs to the FlgI family.</text>
</comment>
<protein>
    <recommendedName>
        <fullName evidence="1">Flagellar P-ring protein</fullName>
    </recommendedName>
    <alternativeName>
        <fullName evidence="1">Basal body P-ring protein</fullName>
    </alternativeName>
</protein>
<evidence type="ECO:0000255" key="1">
    <source>
        <dbReference type="HAMAP-Rule" id="MF_00416"/>
    </source>
</evidence>
<reference key="1">
    <citation type="journal article" date="2005" name="Nucleic Acids Res.">
        <title>The genome sequence of Xanthomonas oryzae pathovar oryzae KACC10331, the bacterial blight pathogen of rice.</title>
        <authorList>
            <person name="Lee B.-M."/>
            <person name="Park Y.-J."/>
            <person name="Park D.-S."/>
            <person name="Kang H.-W."/>
            <person name="Kim J.-G."/>
            <person name="Song E.-S."/>
            <person name="Park I.-C."/>
            <person name="Yoon U.-H."/>
            <person name="Hahn J.-H."/>
            <person name="Koo B.-S."/>
            <person name="Lee G.-B."/>
            <person name="Kim H."/>
            <person name="Park H.-S."/>
            <person name="Yoon K.-O."/>
            <person name="Kim J.-H."/>
            <person name="Jung C.-H."/>
            <person name="Koh N.-H."/>
            <person name="Seo J.-S."/>
            <person name="Go S.-J."/>
        </authorList>
    </citation>
    <scope>NUCLEOTIDE SEQUENCE [LARGE SCALE GENOMIC DNA]</scope>
    <source>
        <strain>KACC10331 / KXO85</strain>
    </source>
</reference>
<name>FLGI_XANOR</name>
<gene>
    <name evidence="1" type="primary">flgI</name>
    <name type="ordered locus">XOO2577</name>
</gene>
<sequence>MNLSSLSFRLLATLLGACVVVAPASAERIKDLAQVGGVRGNALVGYGLVVGLDGSGDRTSQAPFTVQSLKNLLGELGVNVPANVNPQLKNVAAVAIHAELPPFAKPGQPIDITVSSIANAVSLRGGSLLMAPLKGADGQVYAMAQGNLVVGGFGAQGKDGSRVSVNVPSVGRIPNGAIVERALPDVFAGTGEITLNLHQNDFTTVSRMVAAIDSSFGAGTARAVDGVTVAVRSPTDPGARIGLLSRLENVELSPGDAPAKVVVNARTGTVVIGQLVRVMPAAIAHGSLTVTISENTNVSQPGAFSGGRTAVTQQSTITATSEGSRMFKFEGGTTLDQIVRAVNEVGAAPGDLVAILEALKQAGALSAELEVI</sequence>
<proteinExistence type="inferred from homology"/>
<accession>Q5GZP0</accession>
<keyword id="KW-0975">Bacterial flagellum</keyword>
<keyword id="KW-0574">Periplasm</keyword>
<keyword id="KW-1185">Reference proteome</keyword>
<keyword id="KW-0732">Signal</keyword>